<gene>
    <name evidence="1" type="primary">ackA</name>
    <name type="ordered locus">SAHV_1697</name>
</gene>
<evidence type="ECO:0000255" key="1">
    <source>
        <dbReference type="HAMAP-Rule" id="MF_00020"/>
    </source>
</evidence>
<dbReference type="EC" id="2.7.2.1" evidence="1"/>
<dbReference type="EMBL" id="AP009324">
    <property type="protein sequence ID" value="BAF78580.1"/>
    <property type="molecule type" value="Genomic_DNA"/>
</dbReference>
<dbReference type="RefSeq" id="WP_000040065.1">
    <property type="nucleotide sequence ID" value="NC_009782.1"/>
</dbReference>
<dbReference type="SMR" id="A7X3E0"/>
<dbReference type="KEGG" id="saw:SAHV_1697"/>
<dbReference type="HOGENOM" id="CLU_020352_0_1_9"/>
<dbReference type="UniPathway" id="UPA00340">
    <property type="reaction ID" value="UER00458"/>
</dbReference>
<dbReference type="GO" id="GO:0005737">
    <property type="term" value="C:cytoplasm"/>
    <property type="evidence" value="ECO:0007669"/>
    <property type="project" value="UniProtKB-SubCell"/>
</dbReference>
<dbReference type="GO" id="GO:0008776">
    <property type="term" value="F:acetate kinase activity"/>
    <property type="evidence" value="ECO:0007669"/>
    <property type="project" value="UniProtKB-UniRule"/>
</dbReference>
<dbReference type="GO" id="GO:0005524">
    <property type="term" value="F:ATP binding"/>
    <property type="evidence" value="ECO:0007669"/>
    <property type="project" value="UniProtKB-KW"/>
</dbReference>
<dbReference type="GO" id="GO:0000287">
    <property type="term" value="F:magnesium ion binding"/>
    <property type="evidence" value="ECO:0007669"/>
    <property type="project" value="UniProtKB-UniRule"/>
</dbReference>
<dbReference type="GO" id="GO:0006083">
    <property type="term" value="P:acetate metabolic process"/>
    <property type="evidence" value="ECO:0007669"/>
    <property type="project" value="TreeGrafter"/>
</dbReference>
<dbReference type="GO" id="GO:0006085">
    <property type="term" value="P:acetyl-CoA biosynthetic process"/>
    <property type="evidence" value="ECO:0007669"/>
    <property type="project" value="UniProtKB-UniRule"/>
</dbReference>
<dbReference type="CDD" id="cd24010">
    <property type="entry name" value="ASKHA_NBD_AcK_PK"/>
    <property type="match status" value="1"/>
</dbReference>
<dbReference type="Gene3D" id="3.30.420.40">
    <property type="match status" value="2"/>
</dbReference>
<dbReference type="HAMAP" id="MF_00020">
    <property type="entry name" value="Acetate_kinase"/>
    <property type="match status" value="1"/>
</dbReference>
<dbReference type="InterPro" id="IPR004372">
    <property type="entry name" value="Ac/propionate_kinase"/>
</dbReference>
<dbReference type="InterPro" id="IPR000890">
    <property type="entry name" value="Aliphatic_acid_kin_short-chain"/>
</dbReference>
<dbReference type="InterPro" id="IPR023865">
    <property type="entry name" value="Aliphatic_acid_kinase_CS"/>
</dbReference>
<dbReference type="InterPro" id="IPR043129">
    <property type="entry name" value="ATPase_NBD"/>
</dbReference>
<dbReference type="NCBIfam" id="TIGR00016">
    <property type="entry name" value="ackA"/>
    <property type="match status" value="1"/>
</dbReference>
<dbReference type="PANTHER" id="PTHR21060">
    <property type="entry name" value="ACETATE KINASE"/>
    <property type="match status" value="1"/>
</dbReference>
<dbReference type="PANTHER" id="PTHR21060:SF15">
    <property type="entry name" value="ACETATE KINASE-RELATED"/>
    <property type="match status" value="1"/>
</dbReference>
<dbReference type="Pfam" id="PF00871">
    <property type="entry name" value="Acetate_kinase"/>
    <property type="match status" value="1"/>
</dbReference>
<dbReference type="PIRSF" id="PIRSF000722">
    <property type="entry name" value="Acetate_prop_kin"/>
    <property type="match status" value="1"/>
</dbReference>
<dbReference type="PRINTS" id="PR00471">
    <property type="entry name" value="ACETATEKNASE"/>
</dbReference>
<dbReference type="SUPFAM" id="SSF53067">
    <property type="entry name" value="Actin-like ATPase domain"/>
    <property type="match status" value="2"/>
</dbReference>
<dbReference type="PROSITE" id="PS01075">
    <property type="entry name" value="ACETATE_KINASE_1"/>
    <property type="match status" value="1"/>
</dbReference>
<dbReference type="PROSITE" id="PS01076">
    <property type="entry name" value="ACETATE_KINASE_2"/>
    <property type="match status" value="1"/>
</dbReference>
<reference key="1">
    <citation type="journal article" date="2008" name="Antimicrob. Agents Chemother.">
        <title>Mutated response regulator graR is responsible for phenotypic conversion of Staphylococcus aureus from heterogeneous vancomycin-intermediate resistance to vancomycin-intermediate resistance.</title>
        <authorList>
            <person name="Neoh H.-M."/>
            <person name="Cui L."/>
            <person name="Yuzawa H."/>
            <person name="Takeuchi F."/>
            <person name="Matsuo M."/>
            <person name="Hiramatsu K."/>
        </authorList>
    </citation>
    <scope>NUCLEOTIDE SEQUENCE [LARGE SCALE GENOMIC DNA]</scope>
    <source>
        <strain>Mu3 / ATCC 700698</strain>
    </source>
</reference>
<sequence length="400" mass="44041">MSKLILAINAGSSSLKFQLIRMPEEELVTKGLIERIGLKDSIFTIEVNGEKVKTVQDIKDHVEAVDIMLDAFKAHNIINDINDIVGTGHRVVHGGEKFPESVAITDEVEKEIEELSELAPLHNPANLMGIRAFRKLLPNIPHVAIFDTAFHQTMPEKAYLYSLPYHYYKDYGIRKYGFHGTSHKFVSQRAAEMLDKPIEDLRIISCHIGNGASIAAIDGGKSIDTSMGFTPLAGVTMGTRSGNIDPALIPFIMEKTGKTAEQVLEILNKESGLLGLSGTSSDLRDLSEEAESGKARSQMALDVFASKIHKYIGSYAARMHGVDVIVFTAGIGENSVEIRAKVLEGLEFMGVYWDPKKNENLLRGKEGFINYPHSPVKVVVIPTDEESMIARDVMTFGGLK</sequence>
<organism>
    <name type="scientific">Staphylococcus aureus (strain Mu3 / ATCC 700698)</name>
    <dbReference type="NCBI Taxonomy" id="418127"/>
    <lineage>
        <taxon>Bacteria</taxon>
        <taxon>Bacillati</taxon>
        <taxon>Bacillota</taxon>
        <taxon>Bacilli</taxon>
        <taxon>Bacillales</taxon>
        <taxon>Staphylococcaceae</taxon>
        <taxon>Staphylococcus</taxon>
    </lineage>
</organism>
<comment type="function">
    <text evidence="1">Catalyzes the formation of acetyl phosphate from acetate and ATP. Can also catalyze the reverse reaction.</text>
</comment>
<comment type="catalytic activity">
    <reaction evidence="1">
        <text>acetate + ATP = acetyl phosphate + ADP</text>
        <dbReference type="Rhea" id="RHEA:11352"/>
        <dbReference type="ChEBI" id="CHEBI:22191"/>
        <dbReference type="ChEBI" id="CHEBI:30089"/>
        <dbReference type="ChEBI" id="CHEBI:30616"/>
        <dbReference type="ChEBI" id="CHEBI:456216"/>
        <dbReference type="EC" id="2.7.2.1"/>
    </reaction>
</comment>
<comment type="cofactor">
    <cofactor evidence="1">
        <name>Mg(2+)</name>
        <dbReference type="ChEBI" id="CHEBI:18420"/>
    </cofactor>
    <cofactor evidence="1">
        <name>Mn(2+)</name>
        <dbReference type="ChEBI" id="CHEBI:29035"/>
    </cofactor>
    <text evidence="1">Mg(2+). Can also accept Mn(2+).</text>
</comment>
<comment type="pathway">
    <text evidence="1">Metabolic intermediate biosynthesis; acetyl-CoA biosynthesis; acetyl-CoA from acetate: step 1/2.</text>
</comment>
<comment type="subunit">
    <text evidence="1">Homodimer.</text>
</comment>
<comment type="subcellular location">
    <subcellularLocation>
        <location evidence="1">Cytoplasm</location>
    </subcellularLocation>
</comment>
<comment type="similarity">
    <text evidence="1">Belongs to the acetokinase family.</text>
</comment>
<feature type="chain" id="PRO_1000002262" description="Acetate kinase">
    <location>
        <begin position="1"/>
        <end position="400"/>
    </location>
</feature>
<feature type="active site" description="Proton donor/acceptor" evidence="1">
    <location>
        <position position="147"/>
    </location>
</feature>
<feature type="binding site" evidence="1">
    <location>
        <position position="9"/>
    </location>
    <ligand>
        <name>Mg(2+)</name>
        <dbReference type="ChEBI" id="CHEBI:18420"/>
    </ligand>
</feature>
<feature type="binding site" evidence="1">
    <location>
        <position position="16"/>
    </location>
    <ligand>
        <name>ATP</name>
        <dbReference type="ChEBI" id="CHEBI:30616"/>
    </ligand>
</feature>
<feature type="binding site" evidence="1">
    <location>
        <position position="90"/>
    </location>
    <ligand>
        <name>substrate</name>
    </ligand>
</feature>
<feature type="binding site" evidence="1">
    <location>
        <begin position="207"/>
        <end position="211"/>
    </location>
    <ligand>
        <name>ATP</name>
        <dbReference type="ChEBI" id="CHEBI:30616"/>
    </ligand>
</feature>
<feature type="binding site" evidence="1">
    <location>
        <begin position="282"/>
        <end position="284"/>
    </location>
    <ligand>
        <name>ATP</name>
        <dbReference type="ChEBI" id="CHEBI:30616"/>
    </ligand>
</feature>
<feature type="binding site" evidence="1">
    <location>
        <begin position="330"/>
        <end position="334"/>
    </location>
    <ligand>
        <name>ATP</name>
        <dbReference type="ChEBI" id="CHEBI:30616"/>
    </ligand>
</feature>
<feature type="binding site" evidence="1">
    <location>
        <position position="385"/>
    </location>
    <ligand>
        <name>Mg(2+)</name>
        <dbReference type="ChEBI" id="CHEBI:18420"/>
    </ligand>
</feature>
<feature type="site" description="Transition state stabilizer" evidence="1">
    <location>
        <position position="179"/>
    </location>
</feature>
<feature type="site" description="Transition state stabilizer" evidence="1">
    <location>
        <position position="240"/>
    </location>
</feature>
<keyword id="KW-0067">ATP-binding</keyword>
<keyword id="KW-0963">Cytoplasm</keyword>
<keyword id="KW-0418">Kinase</keyword>
<keyword id="KW-0460">Magnesium</keyword>
<keyword id="KW-0479">Metal-binding</keyword>
<keyword id="KW-0547">Nucleotide-binding</keyword>
<keyword id="KW-0808">Transferase</keyword>
<accession>A7X3E0</accession>
<name>ACKA_STAA1</name>
<protein>
    <recommendedName>
        <fullName evidence="1">Acetate kinase</fullName>
        <ecNumber evidence="1">2.7.2.1</ecNumber>
    </recommendedName>
    <alternativeName>
        <fullName evidence="1">Acetokinase</fullName>
    </alternativeName>
</protein>
<proteinExistence type="inferred from homology"/>